<comment type="function">
    <text evidence="1">Isomerase that catalyzes the conversion of deoxy-ribose 1-phosphate (dRib-1-P) and ribose 1-phosphate (Rib-1-P) to deoxy-ribose 5-phosphate (dRib-5-P) and ribose 5-phosphate (Rib-5-P), respectively.</text>
</comment>
<comment type="catalytic activity">
    <reaction evidence="1">
        <text>2-deoxy-alpha-D-ribose 1-phosphate = 2-deoxy-D-ribose 5-phosphate</text>
        <dbReference type="Rhea" id="RHEA:27658"/>
        <dbReference type="ChEBI" id="CHEBI:57259"/>
        <dbReference type="ChEBI" id="CHEBI:62877"/>
        <dbReference type="EC" id="5.4.2.7"/>
    </reaction>
</comment>
<comment type="catalytic activity">
    <reaction evidence="1">
        <text>alpha-D-ribose 1-phosphate = D-ribose 5-phosphate</text>
        <dbReference type="Rhea" id="RHEA:18793"/>
        <dbReference type="ChEBI" id="CHEBI:57720"/>
        <dbReference type="ChEBI" id="CHEBI:78346"/>
        <dbReference type="EC" id="5.4.2.7"/>
    </reaction>
</comment>
<comment type="cofactor">
    <cofactor evidence="1">
        <name>Mn(2+)</name>
        <dbReference type="ChEBI" id="CHEBI:29035"/>
    </cofactor>
    <text evidence="1">Binds 2 manganese ions.</text>
</comment>
<comment type="pathway">
    <text evidence="1">Carbohydrate degradation; 2-deoxy-D-ribose 1-phosphate degradation; D-glyceraldehyde 3-phosphate and acetaldehyde from 2-deoxy-alpha-D-ribose 1-phosphate: step 1/2.</text>
</comment>
<comment type="subcellular location">
    <subcellularLocation>
        <location evidence="1">Cytoplasm</location>
    </subcellularLocation>
</comment>
<comment type="similarity">
    <text evidence="1">Belongs to the phosphopentomutase family.</text>
</comment>
<name>DEOB_STRTD</name>
<feature type="chain" id="PRO_1000046411" description="Phosphopentomutase">
    <location>
        <begin position="1"/>
        <end position="403"/>
    </location>
</feature>
<feature type="binding site" evidence="1">
    <location>
        <position position="13"/>
    </location>
    <ligand>
        <name>Mn(2+)</name>
        <dbReference type="ChEBI" id="CHEBI:29035"/>
        <label>1</label>
    </ligand>
</feature>
<feature type="binding site" evidence="1">
    <location>
        <position position="298"/>
    </location>
    <ligand>
        <name>Mn(2+)</name>
        <dbReference type="ChEBI" id="CHEBI:29035"/>
        <label>2</label>
    </ligand>
</feature>
<feature type="binding site" evidence="1">
    <location>
        <position position="303"/>
    </location>
    <ligand>
        <name>Mn(2+)</name>
        <dbReference type="ChEBI" id="CHEBI:29035"/>
        <label>2</label>
    </ligand>
</feature>
<feature type="binding site" evidence="1">
    <location>
        <position position="339"/>
    </location>
    <ligand>
        <name>Mn(2+)</name>
        <dbReference type="ChEBI" id="CHEBI:29035"/>
        <label>1</label>
    </ligand>
</feature>
<feature type="binding site" evidence="1">
    <location>
        <position position="340"/>
    </location>
    <ligand>
        <name>Mn(2+)</name>
        <dbReference type="ChEBI" id="CHEBI:29035"/>
        <label>1</label>
    </ligand>
</feature>
<feature type="binding site" evidence="1">
    <location>
        <position position="351"/>
    </location>
    <ligand>
        <name>Mn(2+)</name>
        <dbReference type="ChEBI" id="CHEBI:29035"/>
        <label>2</label>
    </ligand>
</feature>
<proteinExistence type="inferred from homology"/>
<reference key="1">
    <citation type="journal article" date="2006" name="Proc. Natl. Acad. Sci. U.S.A.">
        <title>Comparative genomics of the lactic acid bacteria.</title>
        <authorList>
            <person name="Makarova K.S."/>
            <person name="Slesarev A."/>
            <person name="Wolf Y.I."/>
            <person name="Sorokin A."/>
            <person name="Mirkin B."/>
            <person name="Koonin E.V."/>
            <person name="Pavlov A."/>
            <person name="Pavlova N."/>
            <person name="Karamychev V."/>
            <person name="Polouchine N."/>
            <person name="Shakhova V."/>
            <person name="Grigoriev I."/>
            <person name="Lou Y."/>
            <person name="Rohksar D."/>
            <person name="Lucas S."/>
            <person name="Huang K."/>
            <person name="Goodstein D.M."/>
            <person name="Hawkins T."/>
            <person name="Plengvidhya V."/>
            <person name="Welker D."/>
            <person name="Hughes J."/>
            <person name="Goh Y."/>
            <person name="Benson A."/>
            <person name="Baldwin K."/>
            <person name="Lee J.-H."/>
            <person name="Diaz-Muniz I."/>
            <person name="Dosti B."/>
            <person name="Smeianov V."/>
            <person name="Wechter W."/>
            <person name="Barabote R."/>
            <person name="Lorca G."/>
            <person name="Altermann E."/>
            <person name="Barrangou R."/>
            <person name="Ganesan B."/>
            <person name="Xie Y."/>
            <person name="Rawsthorne H."/>
            <person name="Tamir D."/>
            <person name="Parker C."/>
            <person name="Breidt F."/>
            <person name="Broadbent J.R."/>
            <person name="Hutkins R."/>
            <person name="O'Sullivan D."/>
            <person name="Steele J."/>
            <person name="Unlu G."/>
            <person name="Saier M.H. Jr."/>
            <person name="Klaenhammer T."/>
            <person name="Richardson P."/>
            <person name="Kozyavkin S."/>
            <person name="Weimer B.C."/>
            <person name="Mills D.A."/>
        </authorList>
    </citation>
    <scope>NUCLEOTIDE SEQUENCE [LARGE SCALE GENOMIC DNA]</scope>
    <source>
        <strain>ATCC BAA-491 / LMD-9</strain>
    </source>
</reference>
<organism>
    <name type="scientific">Streptococcus thermophilus (strain ATCC BAA-491 / LMD-9)</name>
    <dbReference type="NCBI Taxonomy" id="322159"/>
    <lineage>
        <taxon>Bacteria</taxon>
        <taxon>Bacillati</taxon>
        <taxon>Bacillota</taxon>
        <taxon>Bacilli</taxon>
        <taxon>Lactobacillales</taxon>
        <taxon>Streptococcaceae</taxon>
        <taxon>Streptococcus</taxon>
    </lineage>
</organism>
<gene>
    <name evidence="1" type="primary">deoB</name>
    <name type="ordered locus">STER_1077</name>
</gene>
<evidence type="ECO:0000255" key="1">
    <source>
        <dbReference type="HAMAP-Rule" id="MF_00740"/>
    </source>
</evidence>
<sequence length="403" mass="44435">MSKFNRMHLIVLDSVGIGAAPDANNFVNAGVPDGASDTLGHISKTVGLNVPNMAKLGLGNIPREQPLKTVPAESNPTGYATKLEEVSLGKDTMTGHWEIMGLNITEPFDTFWNGFPEEILTQIEEFSGRKVIRESNRPYSGTAVIDDFGPRQMETGELIIYTSADPVLQIAAHEDIIPVEELYRICEFARSITLERPALLGRIIARPYVGEPGNFTRTSNRRDLAISPFAPTVLDKLNEAGIDTYSVGKISDIFNGEGINHDMGHNKSNNHGVDNLIKAMTSEDFKHGFSFTNLVDFDALYGHRRNPQGYRDCLHEFDERLPEIIAAMKEDDLLMITADHGNDPTYAGTDHTREYIPFLAYSPSFKCSGLIPVGHFADISATIADNFGVEKAMIGESFLDKLV</sequence>
<keyword id="KW-0963">Cytoplasm</keyword>
<keyword id="KW-0413">Isomerase</keyword>
<keyword id="KW-0464">Manganese</keyword>
<keyword id="KW-0479">Metal-binding</keyword>
<accession>Q03KJ9</accession>
<dbReference type="EC" id="5.4.2.7" evidence="1"/>
<dbReference type="EMBL" id="CP000419">
    <property type="protein sequence ID" value="ABJ66273.1"/>
    <property type="molecule type" value="Genomic_DNA"/>
</dbReference>
<dbReference type="RefSeq" id="WP_011681180.1">
    <property type="nucleotide sequence ID" value="NZ_CP086001.1"/>
</dbReference>
<dbReference type="SMR" id="Q03KJ9"/>
<dbReference type="KEGG" id="ste:STER_1077"/>
<dbReference type="HOGENOM" id="CLU_053861_0_0_9"/>
<dbReference type="UniPathway" id="UPA00002">
    <property type="reaction ID" value="UER00467"/>
</dbReference>
<dbReference type="GO" id="GO:0005829">
    <property type="term" value="C:cytosol"/>
    <property type="evidence" value="ECO:0007669"/>
    <property type="project" value="TreeGrafter"/>
</dbReference>
<dbReference type="GO" id="GO:0000287">
    <property type="term" value="F:magnesium ion binding"/>
    <property type="evidence" value="ECO:0007669"/>
    <property type="project" value="InterPro"/>
</dbReference>
<dbReference type="GO" id="GO:0030145">
    <property type="term" value="F:manganese ion binding"/>
    <property type="evidence" value="ECO:0007669"/>
    <property type="project" value="UniProtKB-UniRule"/>
</dbReference>
<dbReference type="GO" id="GO:0008973">
    <property type="term" value="F:phosphopentomutase activity"/>
    <property type="evidence" value="ECO:0007669"/>
    <property type="project" value="UniProtKB-UniRule"/>
</dbReference>
<dbReference type="GO" id="GO:0006018">
    <property type="term" value="P:2-deoxyribose 1-phosphate catabolic process"/>
    <property type="evidence" value="ECO:0007669"/>
    <property type="project" value="UniProtKB-UniRule"/>
</dbReference>
<dbReference type="GO" id="GO:0006015">
    <property type="term" value="P:5-phosphoribose 1-diphosphate biosynthetic process"/>
    <property type="evidence" value="ECO:0007669"/>
    <property type="project" value="UniProtKB-UniPathway"/>
</dbReference>
<dbReference type="GO" id="GO:0043094">
    <property type="term" value="P:metabolic compound salvage"/>
    <property type="evidence" value="ECO:0007669"/>
    <property type="project" value="InterPro"/>
</dbReference>
<dbReference type="GO" id="GO:0009117">
    <property type="term" value="P:nucleotide metabolic process"/>
    <property type="evidence" value="ECO:0007669"/>
    <property type="project" value="InterPro"/>
</dbReference>
<dbReference type="CDD" id="cd16009">
    <property type="entry name" value="PPM"/>
    <property type="match status" value="1"/>
</dbReference>
<dbReference type="FunFam" id="3.30.70.1250:FF:000001">
    <property type="entry name" value="Phosphopentomutase"/>
    <property type="match status" value="1"/>
</dbReference>
<dbReference type="Gene3D" id="3.40.720.10">
    <property type="entry name" value="Alkaline Phosphatase, subunit A"/>
    <property type="match status" value="1"/>
</dbReference>
<dbReference type="Gene3D" id="3.30.70.1250">
    <property type="entry name" value="Phosphopentomutase"/>
    <property type="match status" value="1"/>
</dbReference>
<dbReference type="HAMAP" id="MF_00740">
    <property type="entry name" value="Phosphopentomut"/>
    <property type="match status" value="1"/>
</dbReference>
<dbReference type="InterPro" id="IPR017850">
    <property type="entry name" value="Alkaline_phosphatase_core_sf"/>
</dbReference>
<dbReference type="InterPro" id="IPR010045">
    <property type="entry name" value="DeoB"/>
</dbReference>
<dbReference type="InterPro" id="IPR006124">
    <property type="entry name" value="Metalloenzyme"/>
</dbReference>
<dbReference type="InterPro" id="IPR024052">
    <property type="entry name" value="Phosphopentomutase_DeoB_cap_sf"/>
</dbReference>
<dbReference type="NCBIfam" id="TIGR01696">
    <property type="entry name" value="deoB"/>
    <property type="match status" value="1"/>
</dbReference>
<dbReference type="NCBIfam" id="NF003766">
    <property type="entry name" value="PRK05362.1"/>
    <property type="match status" value="1"/>
</dbReference>
<dbReference type="PANTHER" id="PTHR21110">
    <property type="entry name" value="PHOSPHOPENTOMUTASE"/>
    <property type="match status" value="1"/>
</dbReference>
<dbReference type="PANTHER" id="PTHR21110:SF0">
    <property type="entry name" value="PHOSPHOPENTOMUTASE"/>
    <property type="match status" value="1"/>
</dbReference>
<dbReference type="Pfam" id="PF01676">
    <property type="entry name" value="Metalloenzyme"/>
    <property type="match status" value="1"/>
</dbReference>
<dbReference type="PIRSF" id="PIRSF001491">
    <property type="entry name" value="Ppentomutase"/>
    <property type="match status" value="1"/>
</dbReference>
<dbReference type="SUPFAM" id="SSF53649">
    <property type="entry name" value="Alkaline phosphatase-like"/>
    <property type="match status" value="1"/>
</dbReference>
<dbReference type="SUPFAM" id="SSF143856">
    <property type="entry name" value="DeoB insert domain-like"/>
    <property type="match status" value="1"/>
</dbReference>
<protein>
    <recommendedName>
        <fullName evidence="1">Phosphopentomutase</fullName>
        <ecNumber evidence="1">5.4.2.7</ecNumber>
    </recommendedName>
    <alternativeName>
        <fullName evidence="1">Phosphodeoxyribomutase</fullName>
    </alternativeName>
</protein>